<sequence length="725" mass="83212">MTDQGVAKEQYITVGSLKEIADPVKKFLRKGNRKGRNQKELKFRAKVVNQQLADETGSINFTTEGVAVNNNQTYEFTGSLKVVDYKLNLAVTSATPAKDQIANLGSEQLSKADIDQHSGKHIVLIKDLINLRIGQSFFARPKDIVHNNEQRRMTATLADNTAAIQAEISVNKKSITQEVLESLNSDKVYLFSDVVLNFNESNKLVARFNYRSNIVEANDRQIQQLSNNNLSAKEYSDETEKKALTDVLQIHEKKERVHKQQNKNKNPRNAHKNHNRQRPNLQETEPVKISGLQQWNNNQTVIGKIVSLRTEDKSLPAKQDGTSTTMVYLKGTIGDETGVIDFDMAEKRDCPRFKENDVVKFTSVMNKGRQSAEGKVGGHYIEVKKFGQYIILSDHNINNVNLNNNLSNLELTARPKNPNPRFIKGEFVGVKEEEKDGNIQYTYTVRSKEGEEQSITIRNKITTLKVGEIHKIDRERKRSSSRPNHQGGQRGNRSHSQNNRNQRNRDKHHNSQNNQPNKYKNTSVQNNNNNKNQQRSQSQNQRPPRNYDNRQGGENRNNRQRNENNRNNFNGNGHRVNNQNNQRNRNSSYPRNNNYDHHHNQQTDISGLEPGKRGQNVTGQVIEVSEFSKQINDKTLHFVKGRIADENANIRFDIKKPQNLEIKVGEVYNFKDVNNKVDDNGYHYIDLNRFGRVFPSHKKFQSINDKRNCDADRSSIEYVKKTVPN</sequence>
<comment type="function">
    <text>Binds specifically to parallel G4-DNA, a four-stranded structure stabilized by tetrads of hydrogen-bonded guanines.</text>
</comment>
<comment type="subcellular location">
    <subcellularLocation>
        <location evidence="3">Nucleus</location>
    </subcellularLocation>
</comment>
<comment type="PTM">
    <text>The N-terminus is blocked.</text>
</comment>
<name>TGP1_TETTH</name>
<evidence type="ECO:0000255" key="1"/>
<evidence type="ECO:0000256" key="2">
    <source>
        <dbReference type="SAM" id="MobiDB-lite"/>
    </source>
</evidence>
<evidence type="ECO:0000305" key="3"/>
<protein>
    <recommendedName>
        <fullName>G-quartet DNA-binding protein TGP1</fullName>
    </recommendedName>
</protein>
<proteinExistence type="evidence at protein level"/>
<feature type="chain" id="PRO_0000072510" description="G-quartet DNA-binding protein TGP1">
    <location>
        <begin position="1"/>
        <end position="725"/>
    </location>
</feature>
<feature type="region of interest" description="Disordered" evidence="2">
    <location>
        <begin position="252"/>
        <end position="284"/>
    </location>
</feature>
<feature type="region of interest" description="Disordered" evidence="2">
    <location>
        <begin position="468"/>
        <end position="614"/>
    </location>
</feature>
<feature type="short sequence motif" description="Nuclear localization signal" evidence="1">
    <location>
        <begin position="241"/>
        <end position="258"/>
    </location>
</feature>
<feature type="compositionally biased region" description="Basic residues" evidence="2">
    <location>
        <begin position="256"/>
        <end position="277"/>
    </location>
</feature>
<feature type="compositionally biased region" description="Basic and acidic residues" evidence="2">
    <location>
        <begin position="468"/>
        <end position="478"/>
    </location>
</feature>
<feature type="compositionally biased region" description="Low complexity" evidence="2">
    <location>
        <begin position="517"/>
        <end position="544"/>
    </location>
</feature>
<feature type="compositionally biased region" description="Basic and acidic residues" evidence="2">
    <location>
        <begin position="545"/>
        <end position="564"/>
    </location>
</feature>
<feature type="compositionally biased region" description="Low complexity" evidence="2">
    <location>
        <begin position="565"/>
        <end position="593"/>
    </location>
</feature>
<feature type="sequence conflict" description="In Ref. 1; AA sequence." evidence="3" ref="1">
    <original>K</original>
    <variation>R</variation>
    <location>
        <position position="385"/>
    </location>
</feature>
<organism>
    <name type="scientific">Tetrahymena thermophila</name>
    <dbReference type="NCBI Taxonomy" id="5911"/>
    <lineage>
        <taxon>Eukaryota</taxon>
        <taxon>Sar</taxon>
        <taxon>Alveolata</taxon>
        <taxon>Ciliophora</taxon>
        <taxon>Intramacronucleata</taxon>
        <taxon>Oligohymenophorea</taxon>
        <taxon>Hymenostomatida</taxon>
        <taxon>Tetrahymenina</taxon>
        <taxon>Tetrahymenidae</taxon>
        <taxon>Tetrahymena</taxon>
    </lineage>
</organism>
<keyword id="KW-0903">Direct protein sequencing</keyword>
<keyword id="KW-0238">DNA-binding</keyword>
<keyword id="KW-0539">Nucleus</keyword>
<accession>O43952</accession>
<gene>
    <name type="primary">TGP1</name>
</gene>
<dbReference type="EMBL" id="AF006380">
    <property type="protein sequence ID" value="AAC48333.1"/>
    <property type="molecule type" value="mRNA"/>
</dbReference>
<dbReference type="PIR" id="T03219">
    <property type="entry name" value="T03219"/>
</dbReference>
<dbReference type="SMR" id="O43952"/>
<dbReference type="GO" id="GO:0005634">
    <property type="term" value="C:nucleus"/>
    <property type="evidence" value="ECO:0007669"/>
    <property type="project" value="UniProtKB-SubCell"/>
</dbReference>
<dbReference type="GO" id="GO:0003677">
    <property type="term" value="F:DNA binding"/>
    <property type="evidence" value="ECO:0007669"/>
    <property type="project" value="UniProtKB-KW"/>
</dbReference>
<dbReference type="Gene3D" id="2.40.50.140">
    <property type="entry name" value="Nucleic acid-binding proteins"/>
    <property type="match status" value="2"/>
</dbReference>
<dbReference type="InterPro" id="IPR012340">
    <property type="entry name" value="NA-bd_OB-fold"/>
</dbReference>
<dbReference type="SUPFAM" id="SSF50249">
    <property type="entry name" value="Nucleic acid-binding proteins"/>
    <property type="match status" value="2"/>
</dbReference>
<reference key="1">
    <citation type="journal article" date="1998" name="Nucleic Acids Res.">
        <title>Purification, characterization and molecular cloning of TGP1, a novel G-DNA binding protein from Tetrahymena thermophila.</title>
        <authorList>
            <person name="Lu Q."/>
            <person name="Schierer T.P."/>
            <person name="Kang S.-G."/>
            <person name="Henderson E."/>
        </authorList>
    </citation>
    <scope>NUCLEOTIDE SEQUENCE [MRNA]</scope>
    <scope>PROTEIN SEQUENCE OF 368-390</scope>
    <source>
        <strain>C3-V</strain>
    </source>
</reference>
<reference key="2">
    <citation type="journal article" date="1994" name="Biochemistry">
        <title>A protein from Tetrahymena thermophila that specifically binds parallel-stranded G4-DNA.</title>
        <authorList>
            <person name="Schierer T."/>
            <person name="Henderson E."/>
        </authorList>
    </citation>
    <scope>CHARACTERIZATION</scope>
    <source>
        <strain>C3-V</strain>
    </source>
</reference>